<evidence type="ECO:0000255" key="1">
    <source>
        <dbReference type="HAMAP-Rule" id="MF_01321"/>
    </source>
</evidence>
<gene>
    <name evidence="1" type="primary">rpoB</name>
    <name type="ordered locus">M28_Spy0081</name>
</gene>
<accession>Q48VR1</accession>
<sequence length="1188" mass="132855">MAGHEVRYGKHRTRRSFSRIKEVLDLPNLIEIQTDSFQDFLDSGLKEVFEDVLPISNFTDTMELEFVGYEFKEPKYTLEEARIHDASYSAPIFVTFRLVNKETGEIKTQEVFFGDFPIMTEMGTFIINGGERIIVSQLVRSPGVYFNDKVDKNGKVGYGSTVIPNRGAWLELETDSKDIAYTRIDRTRKIPFTTLVRALGFSGDDEIVDIFGESDLVRNTIEKDIHKNPSDSRTDEALKEIYERLRPGEPKTADSSRSLLIARFFDARRYDLAAVGRYKVNKKLNIKTRLLNQIIAENLVDAETGEILVEAGTEMTRSVIESIEEHLDGDLNKFVYTPNDYAVVTEPVVLQKFKVVSPIDPDRVVTIVGNANPDDKVRALTPADILAEMSYFLNLAEGLGKVDDIDHLGNRRIRAVGELLANQFRIGLARMERNVRERMSVQDNDVLTPQQIINIRPVTAAVKEFFGSSQLSQFMDQHNPLSELSHKRRLSALGPGGLTRDRAGYEVRDVHYTHYGRMCPIETPEGPNIGLINNLSSFGHLNKYGFIQTPYRKVDRATGRVTNEIVWLTADEEDEYTVAQANSKLNEDGTFAEEIVMGRHQGNNQEFSASVVDFVDVSPKQVVAVATACIPFLENDDSNRALMGANMQRQAVPLIDPKAPYVGTGMEYQAAHDSGAAVIAQHNGKVVFSDAEKVEIRRQDGSLDVYHITKFRRSNSGTAYNQRTLVKVGDIVEKGDFIADGPSMENGEMALGQNPVVAYMTWEGYNFEDAVIMSERLVKEDVYTSVHLEEFESETRDTKLGPEEITREIPNVGEEALKDLDEMGIIRIGAEVKEGDILVGKVTPKGEKDLSAEERLLHAIFGDKSREVRDTSLRVPHGGDGIVRDVKIFTRANGDELQSGVNMLVRVYIAQKRKIKVGDKMAGRHGNKGVVSRIVPVEDMPYLPDGTPVDIMLNPLGVPSRMNIGQVMELHLGMAARNLGIHIATPVFDGASSEDLWDTVREAGMDSDAKTVLYDGRTGEPFDNRVSVGVMYMIKLHHMVDDKLHARSVGPYSLVTQQPLGGKAQFGGQRFGEMEVWALEAYGASNVLQEILTYKSDDVTGRLKAYEAITKGKPIPKPGVPESFRVLVKELQSLGLDMRVLDEDDNEVELRDLDEGEDDDIMHVDDLEKAREKQAQETQEVSETTDEK</sequence>
<dbReference type="EC" id="2.7.7.6" evidence="1"/>
<dbReference type="EMBL" id="CP000056">
    <property type="protein sequence ID" value="AAX71195.1"/>
    <property type="molecule type" value="Genomic_DNA"/>
</dbReference>
<dbReference type="RefSeq" id="WP_002986567.1">
    <property type="nucleotide sequence ID" value="NC_007296.2"/>
</dbReference>
<dbReference type="SMR" id="Q48VR1"/>
<dbReference type="KEGG" id="spb:M28_Spy0081"/>
<dbReference type="HOGENOM" id="CLU_000524_4_1_9"/>
<dbReference type="GO" id="GO:0000428">
    <property type="term" value="C:DNA-directed RNA polymerase complex"/>
    <property type="evidence" value="ECO:0007669"/>
    <property type="project" value="UniProtKB-KW"/>
</dbReference>
<dbReference type="GO" id="GO:0003677">
    <property type="term" value="F:DNA binding"/>
    <property type="evidence" value="ECO:0007669"/>
    <property type="project" value="UniProtKB-UniRule"/>
</dbReference>
<dbReference type="GO" id="GO:0003899">
    <property type="term" value="F:DNA-directed RNA polymerase activity"/>
    <property type="evidence" value="ECO:0007669"/>
    <property type="project" value="UniProtKB-UniRule"/>
</dbReference>
<dbReference type="GO" id="GO:0032549">
    <property type="term" value="F:ribonucleoside binding"/>
    <property type="evidence" value="ECO:0007669"/>
    <property type="project" value="InterPro"/>
</dbReference>
<dbReference type="GO" id="GO:0006351">
    <property type="term" value="P:DNA-templated transcription"/>
    <property type="evidence" value="ECO:0007669"/>
    <property type="project" value="UniProtKB-UniRule"/>
</dbReference>
<dbReference type="CDD" id="cd00653">
    <property type="entry name" value="RNA_pol_B_RPB2"/>
    <property type="match status" value="1"/>
</dbReference>
<dbReference type="Gene3D" id="2.40.50.100">
    <property type="match status" value="1"/>
</dbReference>
<dbReference type="Gene3D" id="2.40.50.150">
    <property type="match status" value="1"/>
</dbReference>
<dbReference type="Gene3D" id="3.90.1100.10">
    <property type="match status" value="2"/>
</dbReference>
<dbReference type="Gene3D" id="2.30.150.10">
    <property type="entry name" value="DNA-directed RNA polymerase, beta subunit, external 1 domain"/>
    <property type="match status" value="1"/>
</dbReference>
<dbReference type="Gene3D" id="2.40.270.10">
    <property type="entry name" value="DNA-directed RNA polymerase, subunit 2, domain 6"/>
    <property type="match status" value="1"/>
</dbReference>
<dbReference type="Gene3D" id="3.90.1800.10">
    <property type="entry name" value="RNA polymerase alpha subunit dimerisation domain"/>
    <property type="match status" value="1"/>
</dbReference>
<dbReference type="Gene3D" id="3.90.1110.10">
    <property type="entry name" value="RNA polymerase Rpb2, domain 2"/>
    <property type="match status" value="1"/>
</dbReference>
<dbReference type="HAMAP" id="MF_01321">
    <property type="entry name" value="RNApol_bact_RpoB"/>
    <property type="match status" value="1"/>
</dbReference>
<dbReference type="InterPro" id="IPR042107">
    <property type="entry name" value="DNA-dir_RNA_pol_bsu_ext_1_sf"/>
</dbReference>
<dbReference type="InterPro" id="IPR019462">
    <property type="entry name" value="DNA-dir_RNA_pol_bsu_external_1"/>
</dbReference>
<dbReference type="InterPro" id="IPR015712">
    <property type="entry name" value="DNA-dir_RNA_pol_su2"/>
</dbReference>
<dbReference type="InterPro" id="IPR007120">
    <property type="entry name" value="DNA-dir_RNAP_su2_dom"/>
</dbReference>
<dbReference type="InterPro" id="IPR037033">
    <property type="entry name" value="DNA-dir_RNAP_su2_hyb_sf"/>
</dbReference>
<dbReference type="InterPro" id="IPR010243">
    <property type="entry name" value="RNA_pol_bsu_bac"/>
</dbReference>
<dbReference type="InterPro" id="IPR007121">
    <property type="entry name" value="RNA_pol_bsu_CS"/>
</dbReference>
<dbReference type="InterPro" id="IPR007644">
    <property type="entry name" value="RNA_pol_bsu_protrusion"/>
</dbReference>
<dbReference type="InterPro" id="IPR007642">
    <property type="entry name" value="RNA_pol_Rpb2_2"/>
</dbReference>
<dbReference type="InterPro" id="IPR037034">
    <property type="entry name" value="RNA_pol_Rpb2_2_sf"/>
</dbReference>
<dbReference type="InterPro" id="IPR007645">
    <property type="entry name" value="RNA_pol_Rpb2_3"/>
</dbReference>
<dbReference type="InterPro" id="IPR007641">
    <property type="entry name" value="RNA_pol_Rpb2_7"/>
</dbReference>
<dbReference type="InterPro" id="IPR014724">
    <property type="entry name" value="RNA_pol_RPB2_OB-fold"/>
</dbReference>
<dbReference type="NCBIfam" id="NF001616">
    <property type="entry name" value="PRK00405.1"/>
    <property type="match status" value="1"/>
</dbReference>
<dbReference type="NCBIfam" id="TIGR02013">
    <property type="entry name" value="rpoB"/>
    <property type="match status" value="1"/>
</dbReference>
<dbReference type="PANTHER" id="PTHR20856">
    <property type="entry name" value="DNA-DIRECTED RNA POLYMERASE I SUBUNIT 2"/>
    <property type="match status" value="1"/>
</dbReference>
<dbReference type="Pfam" id="PF04563">
    <property type="entry name" value="RNA_pol_Rpb2_1"/>
    <property type="match status" value="1"/>
</dbReference>
<dbReference type="Pfam" id="PF04561">
    <property type="entry name" value="RNA_pol_Rpb2_2"/>
    <property type="match status" value="2"/>
</dbReference>
<dbReference type="Pfam" id="PF04565">
    <property type="entry name" value="RNA_pol_Rpb2_3"/>
    <property type="match status" value="1"/>
</dbReference>
<dbReference type="Pfam" id="PF10385">
    <property type="entry name" value="RNA_pol_Rpb2_45"/>
    <property type="match status" value="1"/>
</dbReference>
<dbReference type="Pfam" id="PF00562">
    <property type="entry name" value="RNA_pol_Rpb2_6"/>
    <property type="match status" value="1"/>
</dbReference>
<dbReference type="Pfam" id="PF04560">
    <property type="entry name" value="RNA_pol_Rpb2_7"/>
    <property type="match status" value="1"/>
</dbReference>
<dbReference type="SUPFAM" id="SSF64484">
    <property type="entry name" value="beta and beta-prime subunits of DNA dependent RNA-polymerase"/>
    <property type="match status" value="1"/>
</dbReference>
<dbReference type="PROSITE" id="PS01166">
    <property type="entry name" value="RNA_POL_BETA"/>
    <property type="match status" value="1"/>
</dbReference>
<proteinExistence type="inferred from homology"/>
<name>RPOB_STRPM</name>
<comment type="function">
    <text evidence="1">DNA-dependent RNA polymerase catalyzes the transcription of DNA into RNA using the four ribonucleoside triphosphates as substrates.</text>
</comment>
<comment type="catalytic activity">
    <reaction evidence="1">
        <text>RNA(n) + a ribonucleoside 5'-triphosphate = RNA(n+1) + diphosphate</text>
        <dbReference type="Rhea" id="RHEA:21248"/>
        <dbReference type="Rhea" id="RHEA-COMP:14527"/>
        <dbReference type="Rhea" id="RHEA-COMP:17342"/>
        <dbReference type="ChEBI" id="CHEBI:33019"/>
        <dbReference type="ChEBI" id="CHEBI:61557"/>
        <dbReference type="ChEBI" id="CHEBI:140395"/>
        <dbReference type="EC" id="2.7.7.6"/>
    </reaction>
</comment>
<comment type="subunit">
    <text evidence="1">The RNAP catalytic core consists of 2 alpha, 1 beta, 1 beta' and 1 omega subunit. When a sigma factor is associated with the core the holoenzyme is formed, which can initiate transcription.</text>
</comment>
<comment type="similarity">
    <text evidence="1">Belongs to the RNA polymerase beta chain family.</text>
</comment>
<protein>
    <recommendedName>
        <fullName evidence="1">DNA-directed RNA polymerase subunit beta</fullName>
        <shortName evidence="1">RNAP subunit beta</shortName>
        <ecNumber evidence="1">2.7.7.6</ecNumber>
    </recommendedName>
    <alternativeName>
        <fullName evidence="1">RNA polymerase subunit beta</fullName>
    </alternativeName>
    <alternativeName>
        <fullName evidence="1">Transcriptase subunit beta</fullName>
    </alternativeName>
</protein>
<feature type="chain" id="PRO_0000224110" description="DNA-directed RNA polymerase subunit beta">
    <location>
        <begin position="1"/>
        <end position="1188"/>
    </location>
</feature>
<keyword id="KW-0240">DNA-directed RNA polymerase</keyword>
<keyword id="KW-0548">Nucleotidyltransferase</keyword>
<keyword id="KW-0804">Transcription</keyword>
<keyword id="KW-0808">Transferase</keyword>
<reference key="1">
    <citation type="journal article" date="2005" name="J. Infect. Dis.">
        <title>Genome sequence of a serotype M28 strain of group A Streptococcus: potential new insights into puerperal sepsis and bacterial disease specificity.</title>
        <authorList>
            <person name="Green N.M."/>
            <person name="Zhang S."/>
            <person name="Porcella S.F."/>
            <person name="Nagiec M.J."/>
            <person name="Barbian K.D."/>
            <person name="Beres S.B."/>
            <person name="Lefebvre R.B."/>
            <person name="Musser J.M."/>
        </authorList>
    </citation>
    <scope>NUCLEOTIDE SEQUENCE [LARGE SCALE GENOMIC DNA]</scope>
    <source>
        <strain>MGAS6180</strain>
    </source>
</reference>
<organism>
    <name type="scientific">Streptococcus pyogenes serotype M28 (strain MGAS6180)</name>
    <dbReference type="NCBI Taxonomy" id="319701"/>
    <lineage>
        <taxon>Bacteria</taxon>
        <taxon>Bacillati</taxon>
        <taxon>Bacillota</taxon>
        <taxon>Bacilli</taxon>
        <taxon>Lactobacillales</taxon>
        <taxon>Streptococcaceae</taxon>
        <taxon>Streptococcus</taxon>
    </lineage>
</organism>